<name>MENC_ECOLC</name>
<protein>
    <recommendedName>
        <fullName evidence="1">o-succinylbenzoate synthase</fullName>
        <shortName evidence="1">OSB synthase</shortName>
        <shortName evidence="1">OSBS</shortName>
        <ecNumber evidence="1">4.2.1.113</ecNumber>
    </recommendedName>
    <alternativeName>
        <fullName evidence="1">4-(2'-carboxyphenyl)-4-oxybutyric acid synthase</fullName>
    </alternativeName>
    <alternativeName>
        <fullName evidence="1">o-succinylbenzoic acid synthase</fullName>
    </alternativeName>
</protein>
<organism>
    <name type="scientific">Escherichia coli (strain ATCC 8739 / DSM 1576 / NBRC 3972 / NCIMB 8545 / WDCM 00012 / Crooks)</name>
    <dbReference type="NCBI Taxonomy" id="481805"/>
    <lineage>
        <taxon>Bacteria</taxon>
        <taxon>Pseudomonadati</taxon>
        <taxon>Pseudomonadota</taxon>
        <taxon>Gammaproteobacteria</taxon>
        <taxon>Enterobacterales</taxon>
        <taxon>Enterobacteriaceae</taxon>
        <taxon>Escherichia</taxon>
    </lineage>
</organism>
<feature type="chain" id="PRO_1000081203" description="o-succinylbenzoate synthase">
    <location>
        <begin position="1"/>
        <end position="320"/>
    </location>
</feature>
<feature type="active site" description="Proton donor" evidence="1">
    <location>
        <position position="133"/>
    </location>
</feature>
<feature type="active site" description="Proton acceptor" evidence="1">
    <location>
        <position position="235"/>
    </location>
</feature>
<feature type="binding site" evidence="1">
    <location>
        <position position="161"/>
    </location>
    <ligand>
        <name>Mg(2+)</name>
        <dbReference type="ChEBI" id="CHEBI:18420"/>
    </ligand>
</feature>
<feature type="binding site" evidence="1">
    <location>
        <position position="190"/>
    </location>
    <ligand>
        <name>Mg(2+)</name>
        <dbReference type="ChEBI" id="CHEBI:18420"/>
    </ligand>
</feature>
<feature type="binding site" evidence="1">
    <location>
        <position position="213"/>
    </location>
    <ligand>
        <name>Mg(2+)</name>
        <dbReference type="ChEBI" id="CHEBI:18420"/>
    </ligand>
</feature>
<proteinExistence type="inferred from homology"/>
<gene>
    <name evidence="1" type="primary">menC</name>
    <name type="ordered locus">EcolC_1387</name>
</gene>
<accession>B1IXS5</accession>
<reference key="1">
    <citation type="submission" date="2008-02" db="EMBL/GenBank/DDBJ databases">
        <title>Complete sequence of Escherichia coli C str. ATCC 8739.</title>
        <authorList>
            <person name="Copeland A."/>
            <person name="Lucas S."/>
            <person name="Lapidus A."/>
            <person name="Glavina del Rio T."/>
            <person name="Dalin E."/>
            <person name="Tice H."/>
            <person name="Bruce D."/>
            <person name="Goodwin L."/>
            <person name="Pitluck S."/>
            <person name="Kiss H."/>
            <person name="Brettin T."/>
            <person name="Detter J.C."/>
            <person name="Han C."/>
            <person name="Kuske C.R."/>
            <person name="Schmutz J."/>
            <person name="Larimer F."/>
            <person name="Land M."/>
            <person name="Hauser L."/>
            <person name="Kyrpides N."/>
            <person name="Mikhailova N."/>
            <person name="Ingram L."/>
            <person name="Richardson P."/>
        </authorList>
    </citation>
    <scope>NUCLEOTIDE SEQUENCE [LARGE SCALE GENOMIC DNA]</scope>
    <source>
        <strain>ATCC 8739 / DSM 1576 / NBRC 3972 / NCIMB 8545 / WDCM 00012 / Crooks</strain>
    </source>
</reference>
<comment type="function">
    <text evidence="1">Converts 2-succinyl-6-hydroxy-2,4-cyclohexadiene-1-carboxylate (SHCHC) to 2-succinylbenzoate (OSB).</text>
</comment>
<comment type="catalytic activity">
    <reaction evidence="1">
        <text>(1R,6R)-6-hydroxy-2-succinyl-cyclohexa-2,4-diene-1-carboxylate = 2-succinylbenzoate + H2O</text>
        <dbReference type="Rhea" id="RHEA:10196"/>
        <dbReference type="ChEBI" id="CHEBI:15377"/>
        <dbReference type="ChEBI" id="CHEBI:18325"/>
        <dbReference type="ChEBI" id="CHEBI:58689"/>
        <dbReference type="EC" id="4.2.1.113"/>
    </reaction>
</comment>
<comment type="cofactor">
    <cofactor evidence="1">
        <name>a divalent metal cation</name>
        <dbReference type="ChEBI" id="CHEBI:60240"/>
    </cofactor>
</comment>
<comment type="pathway">
    <text evidence="1">Quinol/quinone metabolism; 1,4-dihydroxy-2-naphthoate biosynthesis; 1,4-dihydroxy-2-naphthoate from chorismate: step 4/7.</text>
</comment>
<comment type="pathway">
    <text evidence="1">Quinol/quinone metabolism; menaquinone biosynthesis.</text>
</comment>
<comment type="similarity">
    <text evidence="1">Belongs to the mandelate racemase/muconate lactonizing enzyme family. MenC type 1 subfamily.</text>
</comment>
<evidence type="ECO:0000255" key="1">
    <source>
        <dbReference type="HAMAP-Rule" id="MF_00470"/>
    </source>
</evidence>
<dbReference type="EC" id="4.2.1.113" evidence="1"/>
<dbReference type="EMBL" id="CP000946">
    <property type="protein sequence ID" value="ACA77051.1"/>
    <property type="molecule type" value="Genomic_DNA"/>
</dbReference>
<dbReference type="RefSeq" id="WP_001255628.1">
    <property type="nucleotide sequence ID" value="NZ_MTFT01000028.1"/>
</dbReference>
<dbReference type="SMR" id="B1IXS5"/>
<dbReference type="KEGG" id="ecl:EcolC_1387"/>
<dbReference type="HOGENOM" id="CLU_030273_0_1_6"/>
<dbReference type="UniPathway" id="UPA00079"/>
<dbReference type="UniPathway" id="UPA01057">
    <property type="reaction ID" value="UER00165"/>
</dbReference>
<dbReference type="GO" id="GO:0000287">
    <property type="term" value="F:magnesium ion binding"/>
    <property type="evidence" value="ECO:0007669"/>
    <property type="project" value="UniProtKB-UniRule"/>
</dbReference>
<dbReference type="GO" id="GO:0043748">
    <property type="term" value="F:O-succinylbenzoate synthase activity"/>
    <property type="evidence" value="ECO:0007669"/>
    <property type="project" value="UniProtKB-EC"/>
</dbReference>
<dbReference type="GO" id="GO:0009234">
    <property type="term" value="P:menaquinone biosynthetic process"/>
    <property type="evidence" value="ECO:0007669"/>
    <property type="project" value="UniProtKB-UniRule"/>
</dbReference>
<dbReference type="CDD" id="cd03320">
    <property type="entry name" value="OSBS"/>
    <property type="match status" value="1"/>
</dbReference>
<dbReference type="FunFam" id="3.20.20.120:FF:000006">
    <property type="entry name" value="o-succinylbenzoate synthase"/>
    <property type="match status" value="1"/>
</dbReference>
<dbReference type="FunFam" id="3.30.390.10:FF:000005">
    <property type="entry name" value="o-succinylbenzoate synthase"/>
    <property type="match status" value="1"/>
</dbReference>
<dbReference type="Gene3D" id="3.20.20.120">
    <property type="entry name" value="Enolase-like C-terminal domain"/>
    <property type="match status" value="1"/>
</dbReference>
<dbReference type="Gene3D" id="3.30.390.10">
    <property type="entry name" value="Enolase-like, N-terminal domain"/>
    <property type="match status" value="1"/>
</dbReference>
<dbReference type="HAMAP" id="MF_00470">
    <property type="entry name" value="MenC_1"/>
    <property type="match status" value="1"/>
</dbReference>
<dbReference type="InterPro" id="IPR036849">
    <property type="entry name" value="Enolase-like_C_sf"/>
</dbReference>
<dbReference type="InterPro" id="IPR029017">
    <property type="entry name" value="Enolase-like_N"/>
</dbReference>
<dbReference type="InterPro" id="IPR029065">
    <property type="entry name" value="Enolase_C-like"/>
</dbReference>
<dbReference type="InterPro" id="IPR013342">
    <property type="entry name" value="Mandelate_racemase_C"/>
</dbReference>
<dbReference type="InterPro" id="IPR010196">
    <property type="entry name" value="OSB_synthase_MenC1"/>
</dbReference>
<dbReference type="InterPro" id="IPR041338">
    <property type="entry name" value="OSBS_N"/>
</dbReference>
<dbReference type="NCBIfam" id="TIGR01927">
    <property type="entry name" value="menC_gam_Gplu"/>
    <property type="match status" value="1"/>
</dbReference>
<dbReference type="NCBIfam" id="NF003473">
    <property type="entry name" value="PRK05105.1"/>
    <property type="match status" value="1"/>
</dbReference>
<dbReference type="PANTHER" id="PTHR48073:SF2">
    <property type="entry name" value="O-SUCCINYLBENZOATE SYNTHASE"/>
    <property type="match status" value="1"/>
</dbReference>
<dbReference type="PANTHER" id="PTHR48073">
    <property type="entry name" value="O-SUCCINYLBENZOATE SYNTHASE-RELATED"/>
    <property type="match status" value="1"/>
</dbReference>
<dbReference type="Pfam" id="PF21508">
    <property type="entry name" value="MenC_N"/>
    <property type="match status" value="1"/>
</dbReference>
<dbReference type="Pfam" id="PF13378">
    <property type="entry name" value="MR_MLE_C"/>
    <property type="match status" value="1"/>
</dbReference>
<dbReference type="SFLD" id="SFLDG00180">
    <property type="entry name" value="muconate_cycloisomerase"/>
    <property type="match status" value="1"/>
</dbReference>
<dbReference type="SFLD" id="SFLDF00009">
    <property type="entry name" value="o-succinylbenzoate_synthase"/>
    <property type="match status" value="1"/>
</dbReference>
<dbReference type="SMART" id="SM00922">
    <property type="entry name" value="MR_MLE"/>
    <property type="match status" value="1"/>
</dbReference>
<dbReference type="SUPFAM" id="SSF51604">
    <property type="entry name" value="Enolase C-terminal domain-like"/>
    <property type="match status" value="1"/>
</dbReference>
<dbReference type="SUPFAM" id="SSF54826">
    <property type="entry name" value="Enolase N-terminal domain-like"/>
    <property type="match status" value="1"/>
</dbReference>
<sequence>MRSAQVYRWQIPMDAGVVLRDRRLKTRDGLYVCLREGEREGWGEISPLPGFSQETWEEAQSVLLAWVNNWLAGDCELPQMPSVAFGVSCALAELTDTLPQAANYRAAPLCNGDPDDLILKLADMPGEKVAKVKVGLYEAVRDGMVVNLLLEAIPDLHLRLDANRAWTPLKGQQFAKYVNPDYRDRIAFLEEPCKTRDDSRAFARETGIAIAWDESLREPDFAFVAEEGVRAVVIKPTLTGSLEKVREQVQAAHALGLTAVISSSIESSLGLTQLARIAAWLTPDTIPGLDTLDLMQAQQVRRWPGSTLPVVEVDALERLL</sequence>
<keyword id="KW-0456">Lyase</keyword>
<keyword id="KW-0460">Magnesium</keyword>
<keyword id="KW-0474">Menaquinone biosynthesis</keyword>
<keyword id="KW-0479">Metal-binding</keyword>